<evidence type="ECO:0000255" key="1">
    <source>
        <dbReference type="HAMAP-Rule" id="MF_00360"/>
    </source>
</evidence>
<evidence type="ECO:0000256" key="2">
    <source>
        <dbReference type="SAM" id="MobiDB-lite"/>
    </source>
</evidence>
<evidence type="ECO:0000305" key="3"/>
<comment type="function">
    <text evidence="1">Binds together with bS18 to 16S ribosomal RNA.</text>
</comment>
<comment type="similarity">
    <text evidence="1">Belongs to the bacterial ribosomal protein bS6 family.</text>
</comment>
<name>RS6_POLAQ</name>
<proteinExistence type="inferred from homology"/>
<keyword id="KW-1185">Reference proteome</keyword>
<keyword id="KW-0687">Ribonucleoprotein</keyword>
<keyword id="KW-0689">Ribosomal protein</keyword>
<keyword id="KW-0694">RNA-binding</keyword>
<keyword id="KW-0699">rRNA-binding</keyword>
<dbReference type="EMBL" id="CP000655">
    <property type="protein sequence ID" value="ABP33640.1"/>
    <property type="molecule type" value="Genomic_DNA"/>
</dbReference>
<dbReference type="RefSeq" id="WP_011902265.1">
    <property type="nucleotide sequence ID" value="NC_009379.1"/>
</dbReference>
<dbReference type="SMR" id="A4SVX6"/>
<dbReference type="GeneID" id="31480773"/>
<dbReference type="KEGG" id="pnu:Pnuc_0420"/>
<dbReference type="eggNOG" id="COG0360">
    <property type="taxonomic scope" value="Bacteria"/>
</dbReference>
<dbReference type="HOGENOM" id="CLU_113441_6_1_4"/>
<dbReference type="Proteomes" id="UP000000231">
    <property type="component" value="Chromosome"/>
</dbReference>
<dbReference type="GO" id="GO:0022627">
    <property type="term" value="C:cytosolic small ribosomal subunit"/>
    <property type="evidence" value="ECO:0007669"/>
    <property type="project" value="TreeGrafter"/>
</dbReference>
<dbReference type="GO" id="GO:0070181">
    <property type="term" value="F:small ribosomal subunit rRNA binding"/>
    <property type="evidence" value="ECO:0007669"/>
    <property type="project" value="TreeGrafter"/>
</dbReference>
<dbReference type="GO" id="GO:0003735">
    <property type="term" value="F:structural constituent of ribosome"/>
    <property type="evidence" value="ECO:0007669"/>
    <property type="project" value="InterPro"/>
</dbReference>
<dbReference type="GO" id="GO:0006412">
    <property type="term" value="P:translation"/>
    <property type="evidence" value="ECO:0007669"/>
    <property type="project" value="UniProtKB-UniRule"/>
</dbReference>
<dbReference type="CDD" id="cd00473">
    <property type="entry name" value="bS6"/>
    <property type="match status" value="1"/>
</dbReference>
<dbReference type="Gene3D" id="3.30.70.60">
    <property type="match status" value="1"/>
</dbReference>
<dbReference type="HAMAP" id="MF_00360">
    <property type="entry name" value="Ribosomal_bS6"/>
    <property type="match status" value="1"/>
</dbReference>
<dbReference type="InterPro" id="IPR000529">
    <property type="entry name" value="Ribosomal_bS6"/>
</dbReference>
<dbReference type="InterPro" id="IPR035980">
    <property type="entry name" value="Ribosomal_bS6_sf"/>
</dbReference>
<dbReference type="InterPro" id="IPR020814">
    <property type="entry name" value="Ribosomal_S6_plastid/chlpt"/>
</dbReference>
<dbReference type="InterPro" id="IPR014717">
    <property type="entry name" value="Transl_elong_EF1B/ribsomal_bS6"/>
</dbReference>
<dbReference type="NCBIfam" id="TIGR00166">
    <property type="entry name" value="S6"/>
    <property type="match status" value="1"/>
</dbReference>
<dbReference type="PANTHER" id="PTHR21011">
    <property type="entry name" value="MITOCHONDRIAL 28S RIBOSOMAL PROTEIN S6"/>
    <property type="match status" value="1"/>
</dbReference>
<dbReference type="PANTHER" id="PTHR21011:SF1">
    <property type="entry name" value="SMALL RIBOSOMAL SUBUNIT PROTEIN BS6M"/>
    <property type="match status" value="1"/>
</dbReference>
<dbReference type="Pfam" id="PF01250">
    <property type="entry name" value="Ribosomal_S6"/>
    <property type="match status" value="1"/>
</dbReference>
<dbReference type="SUPFAM" id="SSF54995">
    <property type="entry name" value="Ribosomal protein S6"/>
    <property type="match status" value="1"/>
</dbReference>
<gene>
    <name evidence="1" type="primary">rpsF</name>
    <name type="ordered locus">Pnuc_0420</name>
</gene>
<accession>A4SVX6</accession>
<sequence>MRHYEIVFIVHPDQSEQVPAMIDRYKATLAAAGGKIHRIEDWGRRQMAYMIDKLAKAHYVCMNIECDQKTLEELEHAFKFNDAVLRHLIIKTKKAETEPSIMMKEVQREEARKSAQSDAPAVAA</sequence>
<organism>
    <name type="scientific">Polynucleobacter asymbioticus (strain DSM 18221 / CIP 109841 / QLW-P1DMWA-1)</name>
    <name type="common">Polynucleobacter necessarius subsp. asymbioticus</name>
    <dbReference type="NCBI Taxonomy" id="312153"/>
    <lineage>
        <taxon>Bacteria</taxon>
        <taxon>Pseudomonadati</taxon>
        <taxon>Pseudomonadota</taxon>
        <taxon>Betaproteobacteria</taxon>
        <taxon>Burkholderiales</taxon>
        <taxon>Burkholderiaceae</taxon>
        <taxon>Polynucleobacter</taxon>
    </lineage>
</organism>
<reference key="1">
    <citation type="journal article" date="2012" name="Stand. Genomic Sci.">
        <title>Complete genome sequence of Polynucleobacter necessarius subsp. asymbioticus type strain (QLW-P1DMWA-1(T)).</title>
        <authorList>
            <person name="Meincke L."/>
            <person name="Copeland A."/>
            <person name="Lapidus A."/>
            <person name="Lucas S."/>
            <person name="Berry K.W."/>
            <person name="Del Rio T.G."/>
            <person name="Hammon N."/>
            <person name="Dalin E."/>
            <person name="Tice H."/>
            <person name="Pitluck S."/>
            <person name="Richardson P."/>
            <person name="Bruce D."/>
            <person name="Goodwin L."/>
            <person name="Han C."/>
            <person name="Tapia R."/>
            <person name="Detter J.C."/>
            <person name="Schmutz J."/>
            <person name="Brettin T."/>
            <person name="Larimer F."/>
            <person name="Land M."/>
            <person name="Hauser L."/>
            <person name="Kyrpides N.C."/>
            <person name="Ivanova N."/>
            <person name="Goker M."/>
            <person name="Woyke T."/>
            <person name="Wu Q.L."/>
            <person name="Pockl M."/>
            <person name="Hahn M.W."/>
            <person name="Klenk H.P."/>
        </authorList>
    </citation>
    <scope>NUCLEOTIDE SEQUENCE [LARGE SCALE GENOMIC DNA]</scope>
    <source>
        <strain>DSM 18221 / CIP 109841 / QLW-P1DMWA-1</strain>
    </source>
</reference>
<feature type="chain" id="PRO_1000079457" description="Small ribosomal subunit protein bS6">
    <location>
        <begin position="1"/>
        <end position="124"/>
    </location>
</feature>
<feature type="region of interest" description="Disordered" evidence="2">
    <location>
        <begin position="101"/>
        <end position="124"/>
    </location>
</feature>
<feature type="compositionally biased region" description="Basic and acidic residues" evidence="2">
    <location>
        <begin position="105"/>
        <end position="115"/>
    </location>
</feature>
<protein>
    <recommendedName>
        <fullName evidence="1">Small ribosomal subunit protein bS6</fullName>
    </recommendedName>
    <alternativeName>
        <fullName evidence="3">30S ribosomal protein S6</fullName>
    </alternativeName>
</protein>